<reference key="1">
    <citation type="journal article" date="2006" name="PLoS Genet.">
        <title>The complete genome sequence and comparative genome analysis of the high pathogenicity Yersinia enterocolitica strain 8081.</title>
        <authorList>
            <person name="Thomson N.R."/>
            <person name="Howard S."/>
            <person name="Wren B.W."/>
            <person name="Holden M.T.G."/>
            <person name="Crossman L."/>
            <person name="Challis G.L."/>
            <person name="Churcher C."/>
            <person name="Mungall K."/>
            <person name="Brooks K."/>
            <person name="Chillingworth T."/>
            <person name="Feltwell T."/>
            <person name="Abdellah Z."/>
            <person name="Hauser H."/>
            <person name="Jagels K."/>
            <person name="Maddison M."/>
            <person name="Moule S."/>
            <person name="Sanders M."/>
            <person name="Whitehead S."/>
            <person name="Quail M.A."/>
            <person name="Dougan G."/>
            <person name="Parkhill J."/>
            <person name="Prentice M.B."/>
        </authorList>
    </citation>
    <scope>NUCLEOTIDE SEQUENCE [LARGE SCALE GENOMIC DNA]</scope>
    <source>
        <strain>NCTC 13174 / 8081</strain>
    </source>
</reference>
<name>Y1420_YERE8</name>
<protein>
    <recommendedName>
        <fullName evidence="1">UPF0352 protein YE1420</fullName>
    </recommendedName>
</protein>
<evidence type="ECO:0000255" key="1">
    <source>
        <dbReference type="HAMAP-Rule" id="MF_00816"/>
    </source>
</evidence>
<sequence>MPQSSRYSDEHVEQLLSELVSVLEKHRTPTDLSLMVLGNMVTNLINTSIAPAQRKVLARSFAEALQASVREDKAH</sequence>
<organism>
    <name type="scientific">Yersinia enterocolitica serotype O:8 / biotype 1B (strain NCTC 13174 / 8081)</name>
    <dbReference type="NCBI Taxonomy" id="393305"/>
    <lineage>
        <taxon>Bacteria</taxon>
        <taxon>Pseudomonadati</taxon>
        <taxon>Pseudomonadota</taxon>
        <taxon>Gammaproteobacteria</taxon>
        <taxon>Enterobacterales</taxon>
        <taxon>Yersiniaceae</taxon>
        <taxon>Yersinia</taxon>
    </lineage>
</organism>
<comment type="similarity">
    <text evidence="1">Belongs to the UPF0352 family.</text>
</comment>
<accession>A1JLM5</accession>
<dbReference type="EMBL" id="AM286415">
    <property type="protein sequence ID" value="CAL11510.1"/>
    <property type="molecule type" value="Genomic_DNA"/>
</dbReference>
<dbReference type="RefSeq" id="WP_002208836.1">
    <property type="nucleotide sequence ID" value="NC_008800.1"/>
</dbReference>
<dbReference type="RefSeq" id="YP_001005728.1">
    <property type="nucleotide sequence ID" value="NC_008800.1"/>
</dbReference>
<dbReference type="SMR" id="A1JLM5"/>
<dbReference type="KEGG" id="yen:YE1420"/>
<dbReference type="PATRIC" id="fig|393305.7.peg.1545"/>
<dbReference type="eggNOG" id="COG3082">
    <property type="taxonomic scope" value="Bacteria"/>
</dbReference>
<dbReference type="HOGENOM" id="CLU_175457_0_0_6"/>
<dbReference type="OrthoDB" id="5771474at2"/>
<dbReference type="Proteomes" id="UP000000642">
    <property type="component" value="Chromosome"/>
</dbReference>
<dbReference type="Gene3D" id="1.10.3390.10">
    <property type="entry name" value="YejL-like"/>
    <property type="match status" value="1"/>
</dbReference>
<dbReference type="HAMAP" id="MF_00816">
    <property type="entry name" value="UPF0352"/>
    <property type="match status" value="1"/>
</dbReference>
<dbReference type="InterPro" id="IPR009857">
    <property type="entry name" value="UPF0352"/>
</dbReference>
<dbReference type="InterPro" id="IPR023202">
    <property type="entry name" value="YejL_sf"/>
</dbReference>
<dbReference type="NCBIfam" id="NF010242">
    <property type="entry name" value="PRK13689.1"/>
    <property type="match status" value="1"/>
</dbReference>
<dbReference type="Pfam" id="PF07208">
    <property type="entry name" value="DUF1414"/>
    <property type="match status" value="1"/>
</dbReference>
<dbReference type="PIRSF" id="PIRSF006188">
    <property type="entry name" value="UCP006188"/>
    <property type="match status" value="1"/>
</dbReference>
<dbReference type="SUPFAM" id="SSF158651">
    <property type="entry name" value="YejL-like"/>
    <property type="match status" value="1"/>
</dbReference>
<gene>
    <name type="ordered locus">YE1420</name>
</gene>
<proteinExistence type="inferred from homology"/>
<feature type="chain" id="PRO_1000062319" description="UPF0352 protein YE1420">
    <location>
        <begin position="1"/>
        <end position="75"/>
    </location>
</feature>